<organism>
    <name type="scientific">Escherichia coli (strain K12)</name>
    <dbReference type="NCBI Taxonomy" id="83333"/>
    <lineage>
        <taxon>Bacteria</taxon>
        <taxon>Pseudomonadati</taxon>
        <taxon>Pseudomonadota</taxon>
        <taxon>Gammaproteobacteria</taxon>
        <taxon>Enterobacterales</taxon>
        <taxon>Enterobacteriaceae</taxon>
        <taxon>Escherichia</taxon>
    </lineage>
</organism>
<name>WAAP_ECOLI</name>
<comment type="function">
    <text evidence="2">Kinase involved in the biosynthesis of the core oligosaccharide region of lipopolysaccharide (LPS) (By similarity). Catalyzes the phosphorylation of heptose I (HepI), the first heptose added to the Kdo2-lipid A module (By similarity).</text>
</comment>
<comment type="catalytic activity">
    <reaction evidence="2">
        <text>an L-alpha-D-Hep-(1-&gt;3)-L-alpha-D-Hep-(1-&gt;5)-[alpha-Kdo-(2-&gt;4)]-alpha-Kdo-(2-&gt;6)-lipid A + ATP = an L-alpha-D-Hep-(1-&gt;3)-4-O-phospho-L-alpha-D-Hep-(1-&gt;5)-[alpha-Kdo-(2-&gt;4)]-alpha-Kdo-(2-&gt;6)-lipid A + ADP + H(+)</text>
        <dbReference type="Rhea" id="RHEA:74087"/>
        <dbReference type="ChEBI" id="CHEBI:15378"/>
        <dbReference type="ChEBI" id="CHEBI:30616"/>
        <dbReference type="ChEBI" id="CHEBI:193069"/>
        <dbReference type="ChEBI" id="CHEBI:193070"/>
        <dbReference type="ChEBI" id="CHEBI:456216"/>
        <dbReference type="EC" id="2.7.1.235"/>
    </reaction>
</comment>
<comment type="catalytic activity">
    <reaction evidence="2">
        <text>L-alpha-D-Hep-(1-&gt;3)-L-alpha-D-Hep-(1-&gt;5)-[alpha-Kdo-(2-&gt;4)]-alpha-Kdo-(2-&gt;6)-lipid A (E. coli) + ATP = L-alpha-D-Hep-(1-&gt;3)-4-O-phospho-L-alpha-D-Hep-(1-&gt;5)-[alpha-Kdo-(2-&gt;4)]-alpha-Kdo-(2-&gt;6)-lipid A (E. coli) + ADP + H(+)</text>
        <dbReference type="Rhea" id="RHEA:74091"/>
        <dbReference type="ChEBI" id="CHEBI:15378"/>
        <dbReference type="ChEBI" id="CHEBI:30616"/>
        <dbReference type="ChEBI" id="CHEBI:61507"/>
        <dbReference type="ChEBI" id="CHEBI:193075"/>
        <dbReference type="ChEBI" id="CHEBI:456216"/>
        <dbReference type="EC" id="2.7.1.235"/>
    </reaction>
</comment>
<comment type="cofactor">
    <cofactor evidence="2">
        <name>Mg(2+)</name>
        <dbReference type="ChEBI" id="CHEBI:18420"/>
    </cofactor>
</comment>
<comment type="pathway">
    <text evidence="2">Bacterial outer membrane biogenesis; LPS core biosynthesis.</text>
</comment>
<comment type="similarity">
    <text evidence="5">Belongs to the protein kinase superfamily. KdkA/RfaP family.</text>
</comment>
<keyword id="KW-0067">ATP-binding</keyword>
<keyword id="KW-0418">Kinase</keyword>
<keyword id="KW-0448">Lipopolysaccharide biosynthesis</keyword>
<keyword id="KW-0460">Magnesium</keyword>
<keyword id="KW-0547">Nucleotide-binding</keyword>
<keyword id="KW-1185">Reference proteome</keyword>
<keyword id="KW-0808">Transferase</keyword>
<gene>
    <name evidence="4" type="primary">waaP</name>
    <name evidence="3" type="synonym">rfaP</name>
    <name type="ordered locus">b3630</name>
    <name type="ordered locus">JW3605</name>
</gene>
<feature type="chain" id="PRO_0000097285" description="Lipopolysaccharide core heptose(I) kinase WaaP">
    <location>
        <begin position="1"/>
        <end position="265"/>
    </location>
</feature>
<feature type="active site" evidence="1">
    <location>
        <position position="162"/>
    </location>
</feature>
<dbReference type="EC" id="2.7.1.235" evidence="2"/>
<dbReference type="EMBL" id="M80599">
    <property type="protein sequence ID" value="AAA24083.1"/>
    <property type="molecule type" value="Genomic_DNA"/>
</dbReference>
<dbReference type="EMBL" id="U00039">
    <property type="protein sequence ID" value="AAB18607.1"/>
    <property type="molecule type" value="Genomic_DNA"/>
</dbReference>
<dbReference type="EMBL" id="U00096">
    <property type="protein sequence ID" value="AAC76654.1"/>
    <property type="molecule type" value="Genomic_DNA"/>
</dbReference>
<dbReference type="EMBL" id="AP009048">
    <property type="protein sequence ID" value="BAE77662.1"/>
    <property type="molecule type" value="Genomic_DNA"/>
</dbReference>
<dbReference type="PIR" id="C42595">
    <property type="entry name" value="C42595"/>
</dbReference>
<dbReference type="RefSeq" id="NP_418087.1">
    <property type="nucleotide sequence ID" value="NC_000913.3"/>
</dbReference>
<dbReference type="RefSeq" id="WP_000229840.1">
    <property type="nucleotide sequence ID" value="NZ_LN832404.1"/>
</dbReference>
<dbReference type="SMR" id="P25741"/>
<dbReference type="BioGRID" id="4260804">
    <property type="interactions" value="387"/>
</dbReference>
<dbReference type="FunCoup" id="P25741">
    <property type="interactions" value="61"/>
</dbReference>
<dbReference type="IntAct" id="P25741">
    <property type="interactions" value="7"/>
</dbReference>
<dbReference type="STRING" id="511145.b3630"/>
<dbReference type="jPOST" id="P25741"/>
<dbReference type="PaxDb" id="511145-b3630"/>
<dbReference type="EnsemblBacteria" id="AAC76654">
    <property type="protein sequence ID" value="AAC76654"/>
    <property type="gene ID" value="b3630"/>
</dbReference>
<dbReference type="GeneID" id="948150"/>
<dbReference type="KEGG" id="ecj:JW3605"/>
<dbReference type="KEGG" id="eco:b3630"/>
<dbReference type="KEGG" id="ecoc:C3026_19675"/>
<dbReference type="PATRIC" id="fig|1411691.4.peg.3076"/>
<dbReference type="EchoBASE" id="EB1316"/>
<dbReference type="eggNOG" id="COG0515">
    <property type="taxonomic scope" value="Bacteria"/>
</dbReference>
<dbReference type="HOGENOM" id="CLU_081267_0_0_6"/>
<dbReference type="InParanoid" id="P25741"/>
<dbReference type="OMA" id="GWGEIFK"/>
<dbReference type="OrthoDB" id="9782725at2"/>
<dbReference type="PhylomeDB" id="P25741"/>
<dbReference type="BioCyc" id="EcoCyc:EG11340-MONOMER"/>
<dbReference type="BioCyc" id="MetaCyc:EG11340-MONOMER"/>
<dbReference type="BRENDA" id="2.7.1.B23">
    <property type="organism ID" value="2026"/>
</dbReference>
<dbReference type="UniPathway" id="UPA00958"/>
<dbReference type="PRO" id="PR:P25741"/>
<dbReference type="Proteomes" id="UP000000625">
    <property type="component" value="Chromosome"/>
</dbReference>
<dbReference type="GO" id="GO:0005524">
    <property type="term" value="F:ATP binding"/>
    <property type="evidence" value="ECO:0007669"/>
    <property type="project" value="UniProtKB-KW"/>
</dbReference>
<dbReference type="GO" id="GO:0016301">
    <property type="term" value="F:kinase activity"/>
    <property type="evidence" value="ECO:0000314"/>
    <property type="project" value="EcoCyc"/>
</dbReference>
<dbReference type="GO" id="GO:0046835">
    <property type="term" value="P:carbohydrate phosphorylation"/>
    <property type="evidence" value="ECO:0000314"/>
    <property type="project" value="EcoCyc"/>
</dbReference>
<dbReference type="GO" id="GO:0009244">
    <property type="term" value="P:lipopolysaccharide core region biosynthetic process"/>
    <property type="evidence" value="ECO:0000314"/>
    <property type="project" value="EcoCyc"/>
</dbReference>
<dbReference type="InterPro" id="IPR011009">
    <property type="entry name" value="Kinase-like_dom_sf"/>
</dbReference>
<dbReference type="InterPro" id="IPR017172">
    <property type="entry name" value="Lsacc_core_hep_kinase_RfaP"/>
</dbReference>
<dbReference type="NCBIfam" id="NF011703">
    <property type="entry name" value="PRK15123.1"/>
    <property type="match status" value="1"/>
</dbReference>
<dbReference type="Pfam" id="PF06293">
    <property type="entry name" value="Kdo"/>
    <property type="match status" value="1"/>
</dbReference>
<dbReference type="PIRSF" id="PIRSF037318">
    <property type="entry name" value="RfaP"/>
    <property type="match status" value="1"/>
</dbReference>
<dbReference type="SUPFAM" id="SSF56112">
    <property type="entry name" value="Protein kinase-like (PK-like)"/>
    <property type="match status" value="1"/>
</dbReference>
<sequence>MVELKEPLATLWRGKDAFAEVKKLNGEVFRELETRRTLRFELSGKSYFLKWHKGTTLKEIIKNLLSLRMPVLGADREWHAIHRLSDVGVDTMKGIGFGEKGLNPLTRASFIITEDLTPTISLEDYCADWAVNPPDIRVKRMLIARVATMVRKMHTAGINHRDCYICHFLLHLPFTGREDELKISVIDLHRAQIRAKVPRRWRDKDLIGLYFSSMNIGLTQRDIWRFMKVYFGMPLRKILSLEQNLLNMASVKAERIKERTQRKGL</sequence>
<protein>
    <recommendedName>
        <fullName evidence="2">Lipopolysaccharide core heptose(I) kinase WaaP</fullName>
        <ecNumber evidence="2">2.7.1.235</ecNumber>
    </recommendedName>
</protein>
<proteinExistence type="inferred from homology"/>
<evidence type="ECO:0000250" key="1">
    <source>
        <dbReference type="UniProtKB" id="Q9BRS2"/>
    </source>
</evidence>
<evidence type="ECO:0000250" key="2">
    <source>
        <dbReference type="UniProtKB" id="Q9R9D6"/>
    </source>
</evidence>
<evidence type="ECO:0000303" key="3">
    <source>
    </source>
</evidence>
<evidence type="ECO:0000303" key="4">
    <source>
    </source>
</evidence>
<evidence type="ECO:0000305" key="5"/>
<reference key="1">
    <citation type="journal article" date="1992" name="J. Bacteriol.">
        <title>Identification and sequences of the lipopolysaccharide core biosynthetic genes rfaQ, rfaP, and rfaG of Escherichia coli K-12.</title>
        <authorList>
            <person name="Parker C.T."/>
            <person name="Pradel E."/>
            <person name="Schnaitman C.A."/>
        </authorList>
    </citation>
    <scope>NUCLEOTIDE SEQUENCE [GENOMIC DNA]</scope>
    <source>
        <strain>K12</strain>
    </source>
</reference>
<reference key="2">
    <citation type="journal article" date="1994" name="Nucleic Acids Res.">
        <title>Analysis of the Escherichia coli genome. V. DNA sequence of the region from 76.0 to 81.5 minutes.</title>
        <authorList>
            <person name="Sofia H.J."/>
            <person name="Burland V."/>
            <person name="Daniels D.L."/>
            <person name="Plunkett G. III"/>
            <person name="Blattner F.R."/>
        </authorList>
    </citation>
    <scope>NUCLEOTIDE SEQUENCE [LARGE SCALE GENOMIC DNA]</scope>
    <source>
        <strain>K12 / MG1655 / ATCC 47076</strain>
    </source>
</reference>
<reference key="3">
    <citation type="journal article" date="1997" name="Science">
        <title>The complete genome sequence of Escherichia coli K-12.</title>
        <authorList>
            <person name="Blattner F.R."/>
            <person name="Plunkett G. III"/>
            <person name="Bloch C.A."/>
            <person name="Perna N.T."/>
            <person name="Burland V."/>
            <person name="Riley M."/>
            <person name="Collado-Vides J."/>
            <person name="Glasner J.D."/>
            <person name="Rode C.K."/>
            <person name="Mayhew G.F."/>
            <person name="Gregor J."/>
            <person name="Davis N.W."/>
            <person name="Kirkpatrick H.A."/>
            <person name="Goeden M.A."/>
            <person name="Rose D.J."/>
            <person name="Mau B."/>
            <person name="Shao Y."/>
        </authorList>
    </citation>
    <scope>NUCLEOTIDE SEQUENCE [LARGE SCALE GENOMIC DNA]</scope>
    <source>
        <strain>K12 / MG1655 / ATCC 47076</strain>
    </source>
</reference>
<reference key="4">
    <citation type="journal article" date="2006" name="Mol. Syst. Biol.">
        <title>Highly accurate genome sequences of Escherichia coli K-12 strains MG1655 and W3110.</title>
        <authorList>
            <person name="Hayashi K."/>
            <person name="Morooka N."/>
            <person name="Yamamoto Y."/>
            <person name="Fujita K."/>
            <person name="Isono K."/>
            <person name="Choi S."/>
            <person name="Ohtsubo E."/>
            <person name="Baba T."/>
            <person name="Wanner B.L."/>
            <person name="Mori H."/>
            <person name="Horiuchi T."/>
        </authorList>
    </citation>
    <scope>NUCLEOTIDE SEQUENCE [LARGE SCALE GENOMIC DNA]</scope>
    <source>
        <strain>K12 / W3110 / ATCC 27325 / DSM 5911</strain>
    </source>
</reference>
<reference key="5">
    <citation type="journal article" date="1996" name="Trends Microbiol.">
        <title>Bacterial polysaccharide synthesis and gene nomenclature.</title>
        <authorList>
            <person name="Reeves P.R."/>
            <person name="Hobbs M."/>
            <person name="Valvano M.A."/>
            <person name="Skurnik M."/>
            <person name="Whitfield C."/>
            <person name="Coplin D."/>
            <person name="Kido N."/>
            <person name="Klena J."/>
            <person name="Maskell D."/>
            <person name="Raetz C.R.H."/>
            <person name="Rick P.D."/>
        </authorList>
    </citation>
    <scope>NOMENCLATURE</scope>
</reference>
<accession>P25741</accession>
<accession>Q2M7U4</accession>